<feature type="chain" id="PRO_0000407329" description="Exosome complex exonuclease RRP46 homolog">
    <location>
        <begin position="1"/>
        <end position="238"/>
    </location>
</feature>
<feature type="region of interest" description="Disordered" evidence="1">
    <location>
        <begin position="174"/>
        <end position="194"/>
    </location>
</feature>
<feature type="compositionally biased region" description="Basic and acidic residues" evidence="1">
    <location>
        <begin position="183"/>
        <end position="192"/>
    </location>
</feature>
<feature type="mutagenesis site" description="Loss of dsDNA- and ssRNA-binding. Loss of DNase and RNase activities." evidence="2">
    <original>KQ</original>
    <variation>EE</variation>
    <location>
        <begin position="75"/>
        <end position="76"/>
    </location>
</feature>
<feature type="mutagenesis site" description="Strongly reduces DNase activity." evidence="2">
    <original>E</original>
    <variation>Q</variation>
    <location>
        <position position="160"/>
    </location>
</feature>
<feature type="strand" evidence="5">
    <location>
        <begin position="17"/>
        <end position="21"/>
    </location>
</feature>
<feature type="strand" evidence="5">
    <location>
        <begin position="25"/>
        <end position="35"/>
    </location>
</feature>
<feature type="strand" evidence="5">
    <location>
        <begin position="38"/>
        <end position="44"/>
    </location>
</feature>
<feature type="strand" evidence="5">
    <location>
        <begin position="57"/>
        <end position="59"/>
    </location>
</feature>
<feature type="strand" evidence="5">
    <location>
        <begin position="61"/>
        <end position="67"/>
    </location>
</feature>
<feature type="strand" evidence="5">
    <location>
        <begin position="69"/>
        <end position="71"/>
    </location>
</feature>
<feature type="helix" evidence="5">
    <location>
        <begin position="77"/>
        <end position="91"/>
    </location>
</feature>
<feature type="strand" evidence="5">
    <location>
        <begin position="99"/>
        <end position="110"/>
    </location>
</feature>
<feature type="helix" evidence="5">
    <location>
        <begin position="115"/>
        <end position="130"/>
    </location>
</feature>
<feature type="strand" evidence="5">
    <location>
        <begin position="134"/>
        <end position="145"/>
    </location>
</feature>
<feature type="strand" evidence="5">
    <location>
        <begin position="151"/>
        <end position="154"/>
    </location>
</feature>
<feature type="helix" evidence="5">
    <location>
        <begin position="157"/>
        <end position="160"/>
    </location>
</feature>
<feature type="strand" evidence="5">
    <location>
        <begin position="164"/>
        <end position="173"/>
    </location>
</feature>
<feature type="strand" evidence="5">
    <location>
        <begin position="197"/>
        <end position="201"/>
    </location>
</feature>
<feature type="helix" evidence="5">
    <location>
        <begin position="205"/>
        <end position="227"/>
    </location>
</feature>
<feature type="turn" evidence="5">
    <location>
        <begin position="228"/>
        <end position="230"/>
    </location>
</feature>
<gene>
    <name type="primary">RRP46</name>
    <name type="ordered locus">Os03g0854200</name>
    <name type="ordered locus">LOC_Os03g63720</name>
</gene>
<keyword id="KW-0002">3D-structure</keyword>
<keyword id="KW-0238">DNA-binding</keyword>
<keyword id="KW-0269">Exonuclease</keyword>
<keyword id="KW-0271">Exosome</keyword>
<keyword id="KW-0378">Hydrolase</keyword>
<keyword id="KW-0540">Nuclease</keyword>
<keyword id="KW-0539">Nucleus</keyword>
<keyword id="KW-1185">Reference proteome</keyword>
<keyword id="KW-0694">RNA-binding</keyword>
<keyword id="KW-0698">rRNA processing</keyword>
<protein>
    <recommendedName>
        <fullName>Exosome complex exonuclease RRP46 homolog</fullName>
        <ecNumber>3.1.13.-</ecNumber>
    </recommendedName>
    <alternativeName>
        <fullName>Exosome component 5</fullName>
    </alternativeName>
    <alternativeName>
        <fullName>Ribosomal RNA-processing protein 46</fullName>
        <shortName>oRrp46</shortName>
    </alternativeName>
</protein>
<accession>Q84T68</accession>
<accession>A0A0P0W6B3</accession>
<name>EXOS5_ORYSJ</name>
<evidence type="ECO:0000256" key="1">
    <source>
        <dbReference type="SAM" id="MobiDB-lite"/>
    </source>
</evidence>
<evidence type="ECO:0000269" key="2">
    <source>
    </source>
</evidence>
<evidence type="ECO:0000305" key="3"/>
<evidence type="ECO:0000305" key="4">
    <source>
    </source>
</evidence>
<evidence type="ECO:0007829" key="5">
    <source>
        <dbReference type="PDB" id="3HKM"/>
    </source>
</evidence>
<comment type="function">
    <text evidence="2">Probable component of the exosome 3'-&gt;5' exoribonuclease complex, a complex that degrades inherently unstable mRNAs containing AU-rich elements (AREs) within their 3'-untranslated regions. May form a homodimer separately from exosome complexes and function in DNA cleavage process. Binds double-stranded DNA (dsDNA) and single-stranded RNA (ssRNA), and possesses hydrolytic DNase and phosphorolytic RNase activities in vitro.</text>
</comment>
<comment type="subunit">
    <text evidence="4">Homodimer or monomer when reduced or oxidized, respectively. Component of the exosome core complex (Probable).</text>
</comment>
<comment type="subcellular location">
    <subcellularLocation>
        <location evidence="3">Nucleus</location>
        <location evidence="3">Nucleolus</location>
    </subcellularLocation>
</comment>
<comment type="similarity">
    <text evidence="3">Belongs to the RNase PH family.</text>
</comment>
<organism>
    <name type="scientific">Oryza sativa subsp. japonica</name>
    <name type="common">Rice</name>
    <dbReference type="NCBI Taxonomy" id="39947"/>
    <lineage>
        <taxon>Eukaryota</taxon>
        <taxon>Viridiplantae</taxon>
        <taxon>Streptophyta</taxon>
        <taxon>Embryophyta</taxon>
        <taxon>Tracheophyta</taxon>
        <taxon>Spermatophyta</taxon>
        <taxon>Magnoliopsida</taxon>
        <taxon>Liliopsida</taxon>
        <taxon>Poales</taxon>
        <taxon>Poaceae</taxon>
        <taxon>BOP clade</taxon>
        <taxon>Oryzoideae</taxon>
        <taxon>Oryzeae</taxon>
        <taxon>Oryzinae</taxon>
        <taxon>Oryza</taxon>
        <taxon>Oryza sativa</taxon>
    </lineage>
</organism>
<reference key="1">
    <citation type="journal article" date="2005" name="Genome Res.">
        <title>Sequence, annotation, and analysis of synteny between rice chromosome 3 and diverged grass species.</title>
        <authorList>
            <consortium name="The rice chromosome 3 sequencing consortium"/>
            <person name="Buell C.R."/>
            <person name="Yuan Q."/>
            <person name="Ouyang S."/>
            <person name="Liu J."/>
            <person name="Zhu W."/>
            <person name="Wang A."/>
            <person name="Maiti R."/>
            <person name="Haas B."/>
            <person name="Wortman J."/>
            <person name="Pertea M."/>
            <person name="Jones K.M."/>
            <person name="Kim M."/>
            <person name="Overton L."/>
            <person name="Tsitrin T."/>
            <person name="Fadrosh D."/>
            <person name="Bera J."/>
            <person name="Weaver B."/>
            <person name="Jin S."/>
            <person name="Johri S."/>
            <person name="Reardon M."/>
            <person name="Webb K."/>
            <person name="Hill J."/>
            <person name="Moffat K."/>
            <person name="Tallon L."/>
            <person name="Van Aken S."/>
            <person name="Lewis M."/>
            <person name="Utterback T."/>
            <person name="Feldblyum T."/>
            <person name="Zismann V."/>
            <person name="Iobst S."/>
            <person name="Hsiao J."/>
            <person name="de Vazeille A.R."/>
            <person name="Salzberg S.L."/>
            <person name="White O."/>
            <person name="Fraser C.M."/>
            <person name="Yu Y."/>
            <person name="Kim H."/>
            <person name="Rambo T."/>
            <person name="Currie J."/>
            <person name="Collura K."/>
            <person name="Kernodle-Thompson S."/>
            <person name="Wei F."/>
            <person name="Kudrna K."/>
            <person name="Ammiraju J.S.S."/>
            <person name="Luo M."/>
            <person name="Goicoechea J.L."/>
            <person name="Wing R.A."/>
            <person name="Henry D."/>
            <person name="Oates R."/>
            <person name="Palmer M."/>
            <person name="Pries G."/>
            <person name="Saski C."/>
            <person name="Simmons J."/>
            <person name="Soderlund C."/>
            <person name="Nelson W."/>
            <person name="de la Bastide M."/>
            <person name="Spiegel L."/>
            <person name="Nascimento L."/>
            <person name="Huang E."/>
            <person name="Preston R."/>
            <person name="Zutavern T."/>
            <person name="Palmer L."/>
            <person name="O'Shaughnessy A."/>
            <person name="Dike S."/>
            <person name="McCombie W.R."/>
            <person name="Minx P."/>
            <person name="Cordum H."/>
            <person name="Wilson R."/>
            <person name="Jin W."/>
            <person name="Lee H.R."/>
            <person name="Jiang J."/>
            <person name="Jackson S."/>
        </authorList>
    </citation>
    <scope>NUCLEOTIDE SEQUENCE [LARGE SCALE GENOMIC DNA]</scope>
    <source>
        <strain>cv. Nipponbare</strain>
    </source>
</reference>
<reference key="2">
    <citation type="journal article" date="2005" name="Nature">
        <title>The map-based sequence of the rice genome.</title>
        <authorList>
            <consortium name="International rice genome sequencing project (IRGSP)"/>
        </authorList>
    </citation>
    <scope>NUCLEOTIDE SEQUENCE [LARGE SCALE GENOMIC DNA]</scope>
    <source>
        <strain>cv. Nipponbare</strain>
    </source>
</reference>
<reference key="3">
    <citation type="journal article" date="2008" name="Nucleic Acids Res.">
        <title>The rice annotation project database (RAP-DB): 2008 update.</title>
        <authorList>
            <consortium name="The rice annotation project (RAP)"/>
        </authorList>
    </citation>
    <scope>GENOME REANNOTATION</scope>
    <source>
        <strain>cv. Nipponbare</strain>
    </source>
</reference>
<reference key="4">
    <citation type="journal article" date="2013" name="Rice">
        <title>Improvement of the Oryza sativa Nipponbare reference genome using next generation sequence and optical map data.</title>
        <authorList>
            <person name="Kawahara Y."/>
            <person name="de la Bastide M."/>
            <person name="Hamilton J.P."/>
            <person name="Kanamori H."/>
            <person name="McCombie W.R."/>
            <person name="Ouyang S."/>
            <person name="Schwartz D.C."/>
            <person name="Tanaka T."/>
            <person name="Wu J."/>
            <person name="Zhou S."/>
            <person name="Childs K.L."/>
            <person name="Davidson R.M."/>
            <person name="Lin H."/>
            <person name="Quesada-Ocampo L."/>
            <person name="Vaillancourt B."/>
            <person name="Sakai H."/>
            <person name="Lee S.S."/>
            <person name="Kim J."/>
            <person name="Numa H."/>
            <person name="Itoh T."/>
            <person name="Buell C.R."/>
            <person name="Matsumoto T."/>
        </authorList>
    </citation>
    <scope>GENOME REANNOTATION</scope>
    <source>
        <strain>cv. Nipponbare</strain>
    </source>
</reference>
<reference key="5">
    <citation type="journal article" date="2003" name="Science">
        <title>Collection, mapping, and annotation of over 28,000 cDNA clones from japonica rice.</title>
        <authorList>
            <consortium name="The rice full-length cDNA consortium"/>
        </authorList>
    </citation>
    <scope>NUCLEOTIDE SEQUENCE [LARGE SCALE MRNA]</scope>
    <source>
        <strain>cv. Nipponbare</strain>
    </source>
</reference>
<reference key="6">
    <citation type="journal article" date="2010" name="RNA">
        <title>Structural and biochemical characterization of CRN-5 and Rrp46: an exosome component participating in apoptotic DNA degradation.</title>
        <authorList>
            <person name="Yang C.C."/>
            <person name="Wang Y.T."/>
            <person name="Hsiao Y.Y."/>
            <person name="Doudeva L.G."/>
            <person name="Kuo P.H."/>
            <person name="Chow S.Y."/>
            <person name="Yuan H.S."/>
        </authorList>
    </citation>
    <scope>X-RAY CRYSTALLOGRAPHY (1.98 ANGSTROMS)</scope>
    <scope>FUNCTION</scope>
    <scope>SUBUNIT</scope>
    <scope>MUTAGENESIS OF 75-LYS-GLN-76 AND GLU-160</scope>
</reference>
<dbReference type="EC" id="3.1.13.-"/>
<dbReference type="EMBL" id="AC120506">
    <property type="protein sequence ID" value="AAO66540.2"/>
    <property type="molecule type" value="Genomic_DNA"/>
</dbReference>
<dbReference type="EMBL" id="DP000009">
    <property type="protein sequence ID" value="ABF99960.1"/>
    <property type="molecule type" value="Genomic_DNA"/>
</dbReference>
<dbReference type="EMBL" id="AP008209">
    <property type="protein sequence ID" value="BAF13850.1"/>
    <property type="molecule type" value="Genomic_DNA"/>
</dbReference>
<dbReference type="EMBL" id="AP014959">
    <property type="protein sequence ID" value="BAS87423.1"/>
    <property type="molecule type" value="Genomic_DNA"/>
</dbReference>
<dbReference type="EMBL" id="AK069107">
    <property type="protein sequence ID" value="BAG91256.1"/>
    <property type="molecule type" value="mRNA"/>
</dbReference>
<dbReference type="RefSeq" id="XP_015630424.1">
    <property type="nucleotide sequence ID" value="XM_015774938.1"/>
</dbReference>
<dbReference type="PDB" id="3HKM">
    <property type="method" value="X-ray"/>
    <property type="resolution" value="1.98 A"/>
    <property type="chains" value="A/B/C=1-238"/>
</dbReference>
<dbReference type="PDBsum" id="3HKM"/>
<dbReference type="SMR" id="Q84T68"/>
<dbReference type="FunCoup" id="Q84T68">
    <property type="interactions" value="672"/>
</dbReference>
<dbReference type="STRING" id="39947.Q84T68"/>
<dbReference type="PaxDb" id="39947-Q84T68"/>
<dbReference type="EnsemblPlants" id="Os03t0854200-01">
    <property type="protein sequence ID" value="Os03t0854200-01"/>
    <property type="gene ID" value="Os03g0854200"/>
</dbReference>
<dbReference type="Gramene" id="Os03t0854200-01">
    <property type="protein sequence ID" value="Os03t0854200-01"/>
    <property type="gene ID" value="Os03g0854200"/>
</dbReference>
<dbReference type="KEGG" id="dosa:Os03g0854200"/>
<dbReference type="eggNOG" id="KOG1069">
    <property type="taxonomic scope" value="Eukaryota"/>
</dbReference>
<dbReference type="HOGENOM" id="CLU_063514_2_3_1"/>
<dbReference type="InParanoid" id="Q84T68"/>
<dbReference type="OMA" id="CIINEQG"/>
<dbReference type="OrthoDB" id="27298at2759"/>
<dbReference type="EvolutionaryTrace" id="Q84T68"/>
<dbReference type="Proteomes" id="UP000000763">
    <property type="component" value="Chromosome 3"/>
</dbReference>
<dbReference type="Proteomes" id="UP000059680">
    <property type="component" value="Chromosome 3"/>
</dbReference>
<dbReference type="GO" id="GO:0000177">
    <property type="term" value="C:cytoplasmic exosome (RNase complex)"/>
    <property type="evidence" value="ECO:0000318"/>
    <property type="project" value="GO_Central"/>
</dbReference>
<dbReference type="GO" id="GO:0000176">
    <property type="term" value="C:nuclear exosome (RNase complex)"/>
    <property type="evidence" value="ECO:0000318"/>
    <property type="project" value="GO_Central"/>
</dbReference>
<dbReference type="GO" id="GO:0005730">
    <property type="term" value="C:nucleolus"/>
    <property type="evidence" value="ECO:0000318"/>
    <property type="project" value="GO_Central"/>
</dbReference>
<dbReference type="GO" id="GO:0004536">
    <property type="term" value="F:DNA nuclease activity"/>
    <property type="evidence" value="ECO:0000314"/>
    <property type="project" value="UniProtKB"/>
</dbReference>
<dbReference type="GO" id="GO:0003690">
    <property type="term" value="F:double-stranded DNA binding"/>
    <property type="evidence" value="ECO:0000314"/>
    <property type="project" value="UniProtKB"/>
</dbReference>
<dbReference type="GO" id="GO:0004527">
    <property type="term" value="F:exonuclease activity"/>
    <property type="evidence" value="ECO:0007669"/>
    <property type="project" value="UniProtKB-KW"/>
</dbReference>
<dbReference type="GO" id="GO:0042802">
    <property type="term" value="F:identical protein binding"/>
    <property type="evidence" value="ECO:0000353"/>
    <property type="project" value="UniProtKB"/>
</dbReference>
<dbReference type="GO" id="GO:0003723">
    <property type="term" value="F:RNA binding"/>
    <property type="evidence" value="ECO:0000318"/>
    <property type="project" value="GO_Central"/>
</dbReference>
<dbReference type="GO" id="GO:0004540">
    <property type="term" value="F:RNA nuclease activity"/>
    <property type="evidence" value="ECO:0000314"/>
    <property type="project" value="UniProtKB"/>
</dbReference>
<dbReference type="GO" id="GO:0003727">
    <property type="term" value="F:single-stranded RNA binding"/>
    <property type="evidence" value="ECO:0000314"/>
    <property type="project" value="UniProtKB"/>
</dbReference>
<dbReference type="GO" id="GO:0071028">
    <property type="term" value="P:nuclear mRNA surveillance"/>
    <property type="evidence" value="ECO:0000318"/>
    <property type="project" value="GO_Central"/>
</dbReference>
<dbReference type="GO" id="GO:0071051">
    <property type="term" value="P:poly(A)-dependent snoRNA 3'-end processing"/>
    <property type="evidence" value="ECO:0000318"/>
    <property type="project" value="GO_Central"/>
</dbReference>
<dbReference type="GO" id="GO:0016075">
    <property type="term" value="P:rRNA catabolic process"/>
    <property type="evidence" value="ECO:0000318"/>
    <property type="project" value="GO_Central"/>
</dbReference>
<dbReference type="GO" id="GO:0006364">
    <property type="term" value="P:rRNA processing"/>
    <property type="evidence" value="ECO:0007669"/>
    <property type="project" value="UniProtKB-KW"/>
</dbReference>
<dbReference type="GO" id="GO:0034475">
    <property type="term" value="P:U4 snRNA 3'-end processing"/>
    <property type="evidence" value="ECO:0000318"/>
    <property type="project" value="GO_Central"/>
</dbReference>
<dbReference type="CDD" id="cd11372">
    <property type="entry name" value="RNase_PH_RRP46"/>
    <property type="match status" value="1"/>
</dbReference>
<dbReference type="FunFam" id="3.30.230.70:FF:000021">
    <property type="entry name" value="Exosome complex exonuclease RRP46 homolog"/>
    <property type="match status" value="1"/>
</dbReference>
<dbReference type="Gene3D" id="3.30.230.70">
    <property type="entry name" value="GHMP Kinase, N-terminal domain"/>
    <property type="match status" value="1"/>
</dbReference>
<dbReference type="InterPro" id="IPR001247">
    <property type="entry name" value="ExoRNase_PH_dom1"/>
</dbReference>
<dbReference type="InterPro" id="IPR036345">
    <property type="entry name" value="ExoRNase_PH_dom2_sf"/>
</dbReference>
<dbReference type="InterPro" id="IPR027408">
    <property type="entry name" value="PNPase/RNase_PH_dom_sf"/>
</dbReference>
<dbReference type="InterPro" id="IPR020568">
    <property type="entry name" value="Ribosomal_Su5_D2-typ_SF"/>
</dbReference>
<dbReference type="InterPro" id="IPR050080">
    <property type="entry name" value="RNase_PH"/>
</dbReference>
<dbReference type="PANTHER" id="PTHR11953">
    <property type="entry name" value="EXOSOME COMPLEX COMPONENT"/>
    <property type="match status" value="1"/>
</dbReference>
<dbReference type="PANTHER" id="PTHR11953:SF1">
    <property type="entry name" value="EXOSOME COMPLEX COMPONENT RRP46"/>
    <property type="match status" value="1"/>
</dbReference>
<dbReference type="Pfam" id="PF01138">
    <property type="entry name" value="RNase_PH"/>
    <property type="match status" value="1"/>
</dbReference>
<dbReference type="SUPFAM" id="SSF55666">
    <property type="entry name" value="Ribonuclease PH domain 2-like"/>
    <property type="match status" value="1"/>
</dbReference>
<dbReference type="SUPFAM" id="SSF54211">
    <property type="entry name" value="Ribosomal protein S5 domain 2-like"/>
    <property type="match status" value="1"/>
</dbReference>
<sequence length="238" mass="25909">MEESRADGRNPNQLRPFSCTRNPLDRAHGSARWAQGDTIVLAAVYGPKPGTRKGENPEKASIEVVWKPMTGQIGKQEKEYEMTLKRTLQSICLLTVHPNTTTSVILQVVGNDGSLLPCAINACCAALVFAGIPLKHLAVAIGCGVLEDGEVILDTNKAEEQQLKSFAHLVFPNSRKSASSKEPNQKEEDSERGLITSITHGVMSEEDYFSCIERGLAASSRISDFMRTTLQKQAPGDV</sequence>
<proteinExistence type="evidence at protein level"/>